<reference key="1">
    <citation type="journal article" date="2008" name="PLoS ONE">
        <title>Survival in nuclear waste, extreme resistance, and potential applications gleaned from the genome sequence of Kineococcus radiotolerans SRS30216.</title>
        <authorList>
            <person name="Bagwell C.E."/>
            <person name="Bhat S."/>
            <person name="Hawkins G.M."/>
            <person name="Smith B.W."/>
            <person name="Biswas T."/>
            <person name="Hoover T.R."/>
            <person name="Saunders E."/>
            <person name="Han C.S."/>
            <person name="Tsodikov O.V."/>
            <person name="Shimkets L.J."/>
        </authorList>
    </citation>
    <scope>NUCLEOTIDE SEQUENCE [LARGE SCALE GENOMIC DNA]</scope>
    <source>
        <strain>ATCC BAA-149 / DSM 14245 / SRS30216</strain>
    </source>
</reference>
<comment type="function">
    <text evidence="1">Catalyzes the reductive methylation of 2'-deoxyuridine-5'-monophosphate (dUMP) to 2'-deoxythymidine-5'-monophosphate (dTMP) while utilizing 5,10-methylenetetrahydrofolate (mTHF) as the methyl donor and reductant in the reaction, yielding dihydrofolate (DHF) as a by-product. This enzymatic reaction provides an intracellular de novo source of dTMP, an essential precursor for DNA biosynthesis.</text>
</comment>
<comment type="catalytic activity">
    <reaction evidence="1">
        <text>dUMP + (6R)-5,10-methylene-5,6,7,8-tetrahydrofolate = 7,8-dihydrofolate + dTMP</text>
        <dbReference type="Rhea" id="RHEA:12104"/>
        <dbReference type="ChEBI" id="CHEBI:15636"/>
        <dbReference type="ChEBI" id="CHEBI:57451"/>
        <dbReference type="ChEBI" id="CHEBI:63528"/>
        <dbReference type="ChEBI" id="CHEBI:246422"/>
        <dbReference type="EC" id="2.1.1.45"/>
    </reaction>
</comment>
<comment type="pathway">
    <text evidence="1">Pyrimidine metabolism; dTTP biosynthesis.</text>
</comment>
<comment type="subunit">
    <text evidence="1">Homodimer.</text>
</comment>
<comment type="subcellular location">
    <subcellularLocation>
        <location evidence="1">Cytoplasm</location>
    </subcellularLocation>
</comment>
<comment type="similarity">
    <text evidence="1">Belongs to the thymidylate synthase family. Bacterial-type ThyA subfamily.</text>
</comment>
<gene>
    <name evidence="1" type="primary">thyA</name>
    <name type="ordered locus">Krad_4439</name>
</gene>
<keyword id="KW-0963">Cytoplasm</keyword>
<keyword id="KW-0489">Methyltransferase</keyword>
<keyword id="KW-0545">Nucleotide biosynthesis</keyword>
<keyword id="KW-1185">Reference proteome</keyword>
<keyword id="KW-0808">Transferase</keyword>
<dbReference type="EC" id="2.1.1.45" evidence="1"/>
<dbReference type="EMBL" id="CP000750">
    <property type="protein sequence ID" value="ABS05898.1"/>
    <property type="molecule type" value="Genomic_DNA"/>
</dbReference>
<dbReference type="SMR" id="A6WGF9"/>
<dbReference type="STRING" id="266940.Krad_4439"/>
<dbReference type="KEGG" id="kra:Krad_4439"/>
<dbReference type="eggNOG" id="COG0207">
    <property type="taxonomic scope" value="Bacteria"/>
</dbReference>
<dbReference type="HOGENOM" id="CLU_021669_0_0_11"/>
<dbReference type="UniPathway" id="UPA00575"/>
<dbReference type="Proteomes" id="UP000001116">
    <property type="component" value="Chromosome"/>
</dbReference>
<dbReference type="GO" id="GO:0005829">
    <property type="term" value="C:cytosol"/>
    <property type="evidence" value="ECO:0007669"/>
    <property type="project" value="TreeGrafter"/>
</dbReference>
<dbReference type="GO" id="GO:0004799">
    <property type="term" value="F:thymidylate synthase activity"/>
    <property type="evidence" value="ECO:0007669"/>
    <property type="project" value="UniProtKB-UniRule"/>
</dbReference>
<dbReference type="GO" id="GO:0006231">
    <property type="term" value="P:dTMP biosynthetic process"/>
    <property type="evidence" value="ECO:0007669"/>
    <property type="project" value="UniProtKB-UniRule"/>
</dbReference>
<dbReference type="GO" id="GO:0006235">
    <property type="term" value="P:dTTP biosynthetic process"/>
    <property type="evidence" value="ECO:0007669"/>
    <property type="project" value="UniProtKB-UniRule"/>
</dbReference>
<dbReference type="GO" id="GO:0032259">
    <property type="term" value="P:methylation"/>
    <property type="evidence" value="ECO:0007669"/>
    <property type="project" value="UniProtKB-KW"/>
</dbReference>
<dbReference type="CDD" id="cd00351">
    <property type="entry name" value="TS_Pyrimidine_HMase"/>
    <property type="match status" value="1"/>
</dbReference>
<dbReference type="FunFam" id="3.30.572.10:FF:000013">
    <property type="entry name" value="Thymidylate synthase"/>
    <property type="match status" value="1"/>
</dbReference>
<dbReference type="Gene3D" id="3.30.572.10">
    <property type="entry name" value="Thymidylate synthase/dCMP hydroxymethylase domain"/>
    <property type="match status" value="1"/>
</dbReference>
<dbReference type="HAMAP" id="MF_00008">
    <property type="entry name" value="Thymidy_synth_bact"/>
    <property type="match status" value="1"/>
</dbReference>
<dbReference type="InterPro" id="IPR045097">
    <property type="entry name" value="Thymidate_synth/dCMP_Mease"/>
</dbReference>
<dbReference type="InterPro" id="IPR023451">
    <property type="entry name" value="Thymidate_synth/dCMP_Mease_dom"/>
</dbReference>
<dbReference type="InterPro" id="IPR036926">
    <property type="entry name" value="Thymidate_synth/dCMP_Mease_sf"/>
</dbReference>
<dbReference type="InterPro" id="IPR000398">
    <property type="entry name" value="Thymidylate_synthase"/>
</dbReference>
<dbReference type="InterPro" id="IPR020940">
    <property type="entry name" value="Thymidylate_synthase_AS"/>
</dbReference>
<dbReference type="NCBIfam" id="NF002497">
    <property type="entry name" value="PRK01827.1-3"/>
    <property type="match status" value="1"/>
</dbReference>
<dbReference type="NCBIfam" id="NF002499">
    <property type="entry name" value="PRK01827.1-5"/>
    <property type="match status" value="1"/>
</dbReference>
<dbReference type="NCBIfam" id="TIGR03284">
    <property type="entry name" value="thym_sym"/>
    <property type="match status" value="2"/>
</dbReference>
<dbReference type="PANTHER" id="PTHR11548:SF9">
    <property type="entry name" value="THYMIDYLATE SYNTHASE"/>
    <property type="match status" value="1"/>
</dbReference>
<dbReference type="PANTHER" id="PTHR11548">
    <property type="entry name" value="THYMIDYLATE SYNTHASE 1"/>
    <property type="match status" value="1"/>
</dbReference>
<dbReference type="Pfam" id="PF00303">
    <property type="entry name" value="Thymidylat_synt"/>
    <property type="match status" value="1"/>
</dbReference>
<dbReference type="PRINTS" id="PR00108">
    <property type="entry name" value="THYMDSNTHASE"/>
</dbReference>
<dbReference type="SUPFAM" id="SSF55831">
    <property type="entry name" value="Thymidylate synthase/dCMP hydroxymethylase"/>
    <property type="match status" value="1"/>
</dbReference>
<dbReference type="PROSITE" id="PS00091">
    <property type="entry name" value="THYMIDYLATE_SYNTHASE"/>
    <property type="match status" value="1"/>
</dbReference>
<name>TYSY_KINRD</name>
<organism>
    <name type="scientific">Kineococcus radiotolerans (strain ATCC BAA-149 / DSM 14245 / SRS30216)</name>
    <dbReference type="NCBI Taxonomy" id="266940"/>
    <lineage>
        <taxon>Bacteria</taxon>
        <taxon>Bacillati</taxon>
        <taxon>Actinomycetota</taxon>
        <taxon>Actinomycetes</taxon>
        <taxon>Kineosporiales</taxon>
        <taxon>Kineosporiaceae</taxon>
        <taxon>Kineococcus</taxon>
    </lineage>
</organism>
<feature type="chain" id="PRO_0000336006" description="Thymidylate synthase">
    <location>
        <begin position="1"/>
        <end position="268"/>
    </location>
</feature>
<feature type="active site" description="Nucleophile" evidence="1">
    <location>
        <position position="152"/>
    </location>
</feature>
<feature type="binding site" description="in other chain" evidence="1">
    <location>
        <position position="27"/>
    </location>
    <ligand>
        <name>dUMP</name>
        <dbReference type="ChEBI" id="CHEBI:246422"/>
        <note>ligand shared between dimeric partners</note>
    </ligand>
</feature>
<feature type="binding site" evidence="1">
    <location>
        <position position="57"/>
    </location>
    <ligand>
        <name>(6R)-5,10-methylene-5,6,7,8-tetrahydrofolate</name>
        <dbReference type="ChEBI" id="CHEBI:15636"/>
    </ligand>
</feature>
<feature type="binding site" evidence="1">
    <location>
        <begin position="132"/>
        <end position="133"/>
    </location>
    <ligand>
        <name>dUMP</name>
        <dbReference type="ChEBI" id="CHEBI:246422"/>
        <note>ligand shared between dimeric partners</note>
    </ligand>
</feature>
<feature type="binding site" description="in other chain" evidence="1">
    <location>
        <begin position="172"/>
        <end position="175"/>
    </location>
    <ligand>
        <name>dUMP</name>
        <dbReference type="ChEBI" id="CHEBI:246422"/>
        <note>ligand shared between dimeric partners</note>
    </ligand>
</feature>
<feature type="binding site" evidence="1">
    <location>
        <position position="175"/>
    </location>
    <ligand>
        <name>(6R)-5,10-methylene-5,6,7,8-tetrahydrofolate</name>
        <dbReference type="ChEBI" id="CHEBI:15636"/>
    </ligand>
</feature>
<feature type="binding site" description="in other chain" evidence="1">
    <location>
        <position position="183"/>
    </location>
    <ligand>
        <name>dUMP</name>
        <dbReference type="ChEBI" id="CHEBI:246422"/>
        <note>ligand shared between dimeric partners</note>
    </ligand>
</feature>
<feature type="binding site" description="in other chain" evidence="1">
    <location>
        <begin position="213"/>
        <end position="215"/>
    </location>
    <ligand>
        <name>dUMP</name>
        <dbReference type="ChEBI" id="CHEBI:246422"/>
        <note>ligand shared between dimeric partners</note>
    </ligand>
</feature>
<feature type="binding site" evidence="1">
    <location>
        <position position="267"/>
    </location>
    <ligand>
        <name>(6R)-5,10-methylene-5,6,7,8-tetrahydrofolate</name>
        <dbReference type="ChEBI" id="CHEBI:15636"/>
    </ligand>
</feature>
<accession>A6WGF9</accession>
<protein>
    <recommendedName>
        <fullName evidence="1">Thymidylate synthase</fullName>
        <shortName evidence="1">TS</shortName>
        <shortName evidence="1">TSase</shortName>
        <ecNumber evidence="1">2.1.1.45</ecNumber>
    </recommendedName>
</protein>
<evidence type="ECO:0000255" key="1">
    <source>
        <dbReference type="HAMAP-Rule" id="MF_00008"/>
    </source>
</evidence>
<proteinExistence type="inferred from homology"/>
<sequence>MAEQRIDTQYEDLLRHVLATGTPKSDRTGTGTRSVFGHQLRYDLSAGFPLVTTKRVHFKSIALELLWFLRGDGNVRWLQERGVTIWDEWADENGDLGPVYGVQWRSWPTPDGRHVDQIAQVLHTLRTDPDSRRMVVSAWNVAELDRMALAPCHAFFQFHVADGKLSCQLYQRSADLFLGVPFNIASYALLTHLVAAEVGLEVGDFVWTGGDVHVYDNHVEQVTEQLTRTPYPFPRLAVRPAGLFEHEYEDFEVLDYRHHPAIKAPVAV</sequence>